<feature type="chain" id="PRO_1000134019" description="Photosystem II reaction center protein T">
    <location>
        <begin position="1"/>
        <end position="31"/>
    </location>
</feature>
<feature type="transmembrane region" description="Helical" evidence="1">
    <location>
        <begin position="3"/>
        <end position="23"/>
    </location>
</feature>
<evidence type="ECO:0000255" key="1">
    <source>
        <dbReference type="HAMAP-Rule" id="MF_00808"/>
    </source>
</evidence>
<name>PSBT_PICP2</name>
<sequence length="31" mass="3512">MDSVAYIIVLAMALSVLFFAIAFREPPRIEK</sequence>
<dbReference type="EMBL" id="CP000951">
    <property type="protein sequence ID" value="ACA98960.1"/>
    <property type="molecule type" value="Genomic_DNA"/>
</dbReference>
<dbReference type="RefSeq" id="WP_012306584.1">
    <property type="nucleotide sequence ID" value="NZ_JAHHPU010000001.1"/>
</dbReference>
<dbReference type="SMR" id="B1XJ18"/>
<dbReference type="STRING" id="32049.SYNPCC7002_A0957"/>
<dbReference type="KEGG" id="syp:SYNPCC7002_A0957"/>
<dbReference type="eggNOG" id="ENOG5032MQE">
    <property type="taxonomic scope" value="Bacteria"/>
</dbReference>
<dbReference type="HOGENOM" id="CLU_217078_1_0_3"/>
<dbReference type="Proteomes" id="UP000001688">
    <property type="component" value="Chromosome"/>
</dbReference>
<dbReference type="GO" id="GO:0009539">
    <property type="term" value="C:photosystem II reaction center"/>
    <property type="evidence" value="ECO:0007669"/>
    <property type="project" value="InterPro"/>
</dbReference>
<dbReference type="GO" id="GO:0031676">
    <property type="term" value="C:plasma membrane-derived thylakoid membrane"/>
    <property type="evidence" value="ECO:0007669"/>
    <property type="project" value="UniProtKB-SubCell"/>
</dbReference>
<dbReference type="GO" id="GO:0015979">
    <property type="term" value="P:photosynthesis"/>
    <property type="evidence" value="ECO:0007669"/>
    <property type="project" value="UniProtKB-UniRule"/>
</dbReference>
<dbReference type="HAMAP" id="MF_00808">
    <property type="entry name" value="PSII_PsbT"/>
    <property type="match status" value="1"/>
</dbReference>
<dbReference type="InterPro" id="IPR001743">
    <property type="entry name" value="PSII_PsbT"/>
</dbReference>
<dbReference type="InterPro" id="IPR037268">
    <property type="entry name" value="PSII_PsbT_sf"/>
</dbReference>
<dbReference type="NCBIfam" id="NF008825">
    <property type="entry name" value="PRK11875.1"/>
    <property type="match status" value="1"/>
</dbReference>
<dbReference type="PANTHER" id="PTHR36411">
    <property type="match status" value="1"/>
</dbReference>
<dbReference type="PANTHER" id="PTHR36411:SF2">
    <property type="entry name" value="PHOTOSYSTEM II REACTION CENTER PROTEIN T"/>
    <property type="match status" value="1"/>
</dbReference>
<dbReference type="Pfam" id="PF01405">
    <property type="entry name" value="PsbT"/>
    <property type="match status" value="1"/>
</dbReference>
<dbReference type="SUPFAM" id="SSF161029">
    <property type="entry name" value="Photosystem II reaction center protein T, PsbT"/>
    <property type="match status" value="1"/>
</dbReference>
<gene>
    <name evidence="1" type="primary">psbT</name>
    <name type="ordered locus">SYNPCC7002_A0957</name>
</gene>
<protein>
    <recommendedName>
        <fullName evidence="1">Photosystem II reaction center protein T</fullName>
        <shortName evidence="1">PSII-T</shortName>
    </recommendedName>
</protein>
<comment type="function">
    <text evidence="1">Found at the monomer-monomer interface of the photosystem II (PS II) dimer, plays a role in assembly and dimerization of PSII. PSII is a light-driven water plastoquinone oxidoreductase, using light energy to abstract electrons from H(2)O, generating a proton gradient subsequently used for ATP formation.</text>
</comment>
<comment type="subunit">
    <text evidence="1">PSII is composed of 1 copy each of membrane proteins PsbA, PsbB, PsbC, PsbD, PsbE, PsbF, PsbH, PsbI, PsbJ, PsbK, PsbL, PsbM, PsbT, PsbX, PsbY, PsbZ, Psb30/Ycf12, peripheral proteins PsbO, CyanoQ (PsbQ), PsbU, PsbV and a large number of cofactors. It forms dimeric complexes.</text>
</comment>
<comment type="subcellular location">
    <subcellularLocation>
        <location evidence="1">Cellular thylakoid membrane</location>
        <topology evidence="1">Single-pass membrane protein</topology>
    </subcellularLocation>
</comment>
<comment type="similarity">
    <text evidence="1">Belongs to the PsbT family.</text>
</comment>
<keyword id="KW-0472">Membrane</keyword>
<keyword id="KW-0602">Photosynthesis</keyword>
<keyword id="KW-0604">Photosystem II</keyword>
<keyword id="KW-1185">Reference proteome</keyword>
<keyword id="KW-0793">Thylakoid</keyword>
<keyword id="KW-0812">Transmembrane</keyword>
<keyword id="KW-1133">Transmembrane helix</keyword>
<accession>B1XJ18</accession>
<proteinExistence type="inferred from homology"/>
<reference key="1">
    <citation type="submission" date="2008-02" db="EMBL/GenBank/DDBJ databases">
        <title>Complete sequence of Synechococcus sp. PCC 7002.</title>
        <authorList>
            <person name="Li T."/>
            <person name="Zhao J."/>
            <person name="Zhao C."/>
            <person name="Liu Z."/>
            <person name="Zhao F."/>
            <person name="Marquardt J."/>
            <person name="Nomura C.T."/>
            <person name="Persson S."/>
            <person name="Detter J.C."/>
            <person name="Richardson P.M."/>
            <person name="Lanz C."/>
            <person name="Schuster S.C."/>
            <person name="Wang J."/>
            <person name="Li S."/>
            <person name="Huang X."/>
            <person name="Cai T."/>
            <person name="Yu Z."/>
            <person name="Luo J."/>
            <person name="Zhao J."/>
            <person name="Bryant D.A."/>
        </authorList>
    </citation>
    <scope>NUCLEOTIDE SEQUENCE [LARGE SCALE GENOMIC DNA]</scope>
    <source>
        <strain>ATCC 27264 / PCC 7002 / PR-6</strain>
    </source>
</reference>
<organism>
    <name type="scientific">Picosynechococcus sp. (strain ATCC 27264 / PCC 7002 / PR-6)</name>
    <name type="common">Agmenellum quadruplicatum</name>
    <dbReference type="NCBI Taxonomy" id="32049"/>
    <lineage>
        <taxon>Bacteria</taxon>
        <taxon>Bacillati</taxon>
        <taxon>Cyanobacteriota</taxon>
        <taxon>Cyanophyceae</taxon>
        <taxon>Oscillatoriophycideae</taxon>
        <taxon>Chroococcales</taxon>
        <taxon>Geminocystaceae</taxon>
        <taxon>Picosynechococcus</taxon>
    </lineage>
</organism>